<feature type="chain" id="PRO_0000162145" description="Probable tRNA-dihydrouridine synthase">
    <location>
        <begin position="1"/>
        <end position="328"/>
    </location>
</feature>
<feature type="active site" description="Proton donor" evidence="2">
    <location>
        <position position="105"/>
    </location>
</feature>
<feature type="binding site" evidence="1">
    <location>
        <begin position="18"/>
        <end position="20"/>
    </location>
    <ligand>
        <name>FMN</name>
        <dbReference type="ChEBI" id="CHEBI:58210"/>
    </ligand>
</feature>
<feature type="binding site" evidence="1">
    <location>
        <position position="143"/>
    </location>
    <ligand>
        <name>FMN</name>
        <dbReference type="ChEBI" id="CHEBI:58210"/>
    </ligand>
</feature>
<feature type="binding site" evidence="1">
    <location>
        <begin position="208"/>
        <end position="210"/>
    </location>
    <ligand>
        <name>FMN</name>
        <dbReference type="ChEBI" id="CHEBI:58210"/>
    </ligand>
</feature>
<feature type="binding site" evidence="1">
    <location>
        <begin position="232"/>
        <end position="233"/>
    </location>
    <ligand>
        <name>FMN</name>
        <dbReference type="ChEBI" id="CHEBI:58210"/>
    </ligand>
</feature>
<keyword id="KW-0285">Flavoprotein</keyword>
<keyword id="KW-0288">FMN</keyword>
<keyword id="KW-0521">NADP</keyword>
<keyword id="KW-0560">Oxidoreductase</keyword>
<keyword id="KW-0694">RNA-binding</keyword>
<keyword id="KW-0819">tRNA processing</keyword>
<keyword id="KW-0820">tRNA-binding</keyword>
<sequence length="328" mass="37783">MKENFWSELPRPFFILAPMEDVTDIVFRHVVSEAARPDVFFTEFTNTESFCHPEGIHSVRGRLTFSEDEQPMVAHIWGDKPEQFRETSIQLAKMGFKGIDLNMGCPVANVAKKGKGSGLILRPDVAAEIIQATKAGGLPVSVKTRLGYYEIDEWKDWLKHVFEQDIANLSIHLRTRKEMSKVDAHWELIEAIKNLRDEIAPNTLLTINGDIPDRKTGLELAEKYGIDGVMIGRGIFHNPFAFEKEPREHTCKELLDLLRLHLSLFNKYEKDEIRQFKSLRRFFKIYVRGIRGASELRHQLMNTQSIAEARALLDEFEAQMDEDVKLEL</sequence>
<protein>
    <recommendedName>
        <fullName>Probable tRNA-dihydrouridine synthase</fullName>
        <ecNumber>1.3.1.-</ecNumber>
    </recommendedName>
</protein>
<name>DUS_STAAR</name>
<organism>
    <name type="scientific">Staphylococcus aureus (strain MRSA252)</name>
    <dbReference type="NCBI Taxonomy" id="282458"/>
    <lineage>
        <taxon>Bacteria</taxon>
        <taxon>Bacillati</taxon>
        <taxon>Bacillota</taxon>
        <taxon>Bacilli</taxon>
        <taxon>Bacillales</taxon>
        <taxon>Staphylococcaceae</taxon>
        <taxon>Staphylococcus</taxon>
    </lineage>
</organism>
<dbReference type="EC" id="1.3.1.-"/>
<dbReference type="EMBL" id="BX571856">
    <property type="protein sequence ID" value="CAG39125.1"/>
    <property type="molecule type" value="Genomic_DNA"/>
</dbReference>
<dbReference type="RefSeq" id="WP_000662027.1">
    <property type="nucleotide sequence ID" value="NC_002952.2"/>
</dbReference>
<dbReference type="SMR" id="Q6GKK9"/>
<dbReference type="KEGG" id="sar:SAR0099"/>
<dbReference type="HOGENOM" id="CLU_013299_0_3_9"/>
<dbReference type="Proteomes" id="UP000000596">
    <property type="component" value="Chromosome"/>
</dbReference>
<dbReference type="GO" id="GO:0050660">
    <property type="term" value="F:flavin adenine dinucleotide binding"/>
    <property type="evidence" value="ECO:0007669"/>
    <property type="project" value="InterPro"/>
</dbReference>
<dbReference type="GO" id="GO:0000049">
    <property type="term" value="F:tRNA binding"/>
    <property type="evidence" value="ECO:0007669"/>
    <property type="project" value="UniProtKB-KW"/>
</dbReference>
<dbReference type="GO" id="GO:0017150">
    <property type="term" value="F:tRNA dihydrouridine synthase activity"/>
    <property type="evidence" value="ECO:0007669"/>
    <property type="project" value="InterPro"/>
</dbReference>
<dbReference type="CDD" id="cd02801">
    <property type="entry name" value="DUS_like_FMN"/>
    <property type="match status" value="1"/>
</dbReference>
<dbReference type="Gene3D" id="3.20.20.70">
    <property type="entry name" value="Aldolase class I"/>
    <property type="match status" value="1"/>
</dbReference>
<dbReference type="Gene3D" id="1.10.1200.80">
    <property type="entry name" value="Putative flavin oxidoreducatase, domain 2"/>
    <property type="match status" value="1"/>
</dbReference>
<dbReference type="InterPro" id="IPR013785">
    <property type="entry name" value="Aldolase_TIM"/>
</dbReference>
<dbReference type="InterPro" id="IPR035587">
    <property type="entry name" value="DUS-like_FMN-bd"/>
</dbReference>
<dbReference type="InterPro" id="IPR001269">
    <property type="entry name" value="DUS_fam"/>
</dbReference>
<dbReference type="InterPro" id="IPR024036">
    <property type="entry name" value="tRNA-dHydroUridine_Synthase_C"/>
</dbReference>
<dbReference type="InterPro" id="IPR018517">
    <property type="entry name" value="tRNA_hU_synthase_CS"/>
</dbReference>
<dbReference type="PANTHER" id="PTHR11082:SF25">
    <property type="entry name" value="DUS-LIKE FMN-BINDING DOMAIN-CONTAINING PROTEIN"/>
    <property type="match status" value="1"/>
</dbReference>
<dbReference type="PANTHER" id="PTHR11082">
    <property type="entry name" value="TRNA-DIHYDROURIDINE SYNTHASE"/>
    <property type="match status" value="1"/>
</dbReference>
<dbReference type="Pfam" id="PF01207">
    <property type="entry name" value="Dus"/>
    <property type="match status" value="1"/>
</dbReference>
<dbReference type="PIRSF" id="PIRSF006621">
    <property type="entry name" value="Dus"/>
    <property type="match status" value="1"/>
</dbReference>
<dbReference type="SUPFAM" id="SSF51395">
    <property type="entry name" value="FMN-linked oxidoreductases"/>
    <property type="match status" value="1"/>
</dbReference>
<dbReference type="PROSITE" id="PS01136">
    <property type="entry name" value="UPF0034"/>
    <property type="match status" value="1"/>
</dbReference>
<reference key="1">
    <citation type="journal article" date="2004" name="Proc. Natl. Acad. Sci. U.S.A.">
        <title>Complete genomes of two clinical Staphylococcus aureus strains: evidence for the rapid evolution of virulence and drug resistance.</title>
        <authorList>
            <person name="Holden M.T.G."/>
            <person name="Feil E.J."/>
            <person name="Lindsay J.A."/>
            <person name="Peacock S.J."/>
            <person name="Day N.P.J."/>
            <person name="Enright M.C."/>
            <person name="Foster T.J."/>
            <person name="Moore C.E."/>
            <person name="Hurst L."/>
            <person name="Atkin R."/>
            <person name="Barron A."/>
            <person name="Bason N."/>
            <person name="Bentley S.D."/>
            <person name="Chillingworth C."/>
            <person name="Chillingworth T."/>
            <person name="Churcher C."/>
            <person name="Clark L."/>
            <person name="Corton C."/>
            <person name="Cronin A."/>
            <person name="Doggett J."/>
            <person name="Dowd L."/>
            <person name="Feltwell T."/>
            <person name="Hance Z."/>
            <person name="Harris B."/>
            <person name="Hauser H."/>
            <person name="Holroyd S."/>
            <person name="Jagels K."/>
            <person name="James K.D."/>
            <person name="Lennard N."/>
            <person name="Line A."/>
            <person name="Mayes R."/>
            <person name="Moule S."/>
            <person name="Mungall K."/>
            <person name="Ormond D."/>
            <person name="Quail M.A."/>
            <person name="Rabbinowitsch E."/>
            <person name="Rutherford K.M."/>
            <person name="Sanders M."/>
            <person name="Sharp S."/>
            <person name="Simmonds M."/>
            <person name="Stevens K."/>
            <person name="Whitehead S."/>
            <person name="Barrell B.G."/>
            <person name="Spratt B.G."/>
            <person name="Parkhill J."/>
        </authorList>
    </citation>
    <scope>NUCLEOTIDE SEQUENCE [LARGE SCALE GENOMIC DNA]</scope>
    <source>
        <strain>MRSA252</strain>
    </source>
</reference>
<comment type="function">
    <text evidence="1">Catalyzes the synthesis of 5,6-dihydrouridine (D), a modified base found in the D-loop of most tRNAs, via the reduction of the C5-C6 double bond in target uridines.</text>
</comment>
<comment type="catalytic activity">
    <reaction evidence="1">
        <text>a 5,6-dihydrouridine in tRNA + NAD(+) = a uridine in tRNA + NADH + H(+)</text>
        <dbReference type="Rhea" id="RHEA:54452"/>
        <dbReference type="Rhea" id="RHEA-COMP:13339"/>
        <dbReference type="Rhea" id="RHEA-COMP:13887"/>
        <dbReference type="ChEBI" id="CHEBI:15378"/>
        <dbReference type="ChEBI" id="CHEBI:57540"/>
        <dbReference type="ChEBI" id="CHEBI:57945"/>
        <dbReference type="ChEBI" id="CHEBI:65315"/>
        <dbReference type="ChEBI" id="CHEBI:74443"/>
    </reaction>
</comment>
<comment type="catalytic activity">
    <reaction evidence="1">
        <text>a 5,6-dihydrouridine in tRNA + NADP(+) = a uridine in tRNA + NADPH + H(+)</text>
        <dbReference type="Rhea" id="RHEA:23624"/>
        <dbReference type="Rhea" id="RHEA-COMP:13339"/>
        <dbReference type="Rhea" id="RHEA-COMP:13887"/>
        <dbReference type="ChEBI" id="CHEBI:15378"/>
        <dbReference type="ChEBI" id="CHEBI:57783"/>
        <dbReference type="ChEBI" id="CHEBI:58349"/>
        <dbReference type="ChEBI" id="CHEBI:65315"/>
        <dbReference type="ChEBI" id="CHEBI:74443"/>
    </reaction>
</comment>
<comment type="cofactor">
    <cofactor evidence="1">
        <name>FMN</name>
        <dbReference type="ChEBI" id="CHEBI:58210"/>
    </cofactor>
</comment>
<comment type="similarity">
    <text evidence="3">Belongs to the Dus family.</text>
</comment>
<gene>
    <name type="primary">dus</name>
    <name type="ordered locus">SAR0099</name>
</gene>
<evidence type="ECO:0000250" key="1">
    <source>
        <dbReference type="UniProtKB" id="P33371"/>
    </source>
</evidence>
<evidence type="ECO:0000250" key="2">
    <source>
        <dbReference type="UniProtKB" id="Q5SMC7"/>
    </source>
</evidence>
<evidence type="ECO:0000305" key="3"/>
<accession>Q6GKK9</accession>
<proteinExistence type="inferred from homology"/>